<evidence type="ECO:0000250" key="1"/>
<evidence type="ECO:0000250" key="2">
    <source>
        <dbReference type="UniProtKB" id="P51788"/>
    </source>
</evidence>
<evidence type="ECO:0000250" key="3">
    <source>
        <dbReference type="UniProtKB" id="Q9R0A1"/>
    </source>
</evidence>
<evidence type="ECO:0000250" key="4">
    <source>
        <dbReference type="UniProtKB" id="Q9WU45"/>
    </source>
</evidence>
<evidence type="ECO:0000255" key="5"/>
<evidence type="ECO:0000255" key="6">
    <source>
        <dbReference type="PROSITE-ProRule" id="PRU00703"/>
    </source>
</evidence>
<evidence type="ECO:0000256" key="7">
    <source>
        <dbReference type="SAM" id="MobiDB-lite"/>
    </source>
</evidence>
<evidence type="ECO:0000269" key="8">
    <source>
    </source>
</evidence>
<evidence type="ECO:0000269" key="9">
    <source>
    </source>
</evidence>
<evidence type="ECO:0000269" key="10">
    <source>
    </source>
</evidence>
<evidence type="ECO:0000269" key="11">
    <source>
    </source>
</evidence>
<evidence type="ECO:0000269" key="12">
    <source>
    </source>
</evidence>
<evidence type="ECO:0000269" key="13">
    <source>
    </source>
</evidence>
<evidence type="ECO:0000305" key="14"/>
<evidence type="ECO:0007744" key="15">
    <source>
    </source>
</evidence>
<sequence length="907" mass="99328">MAAATAAAATVAGEGMEPRALQYEQTLMYGRYTQELGAFAKEEAARIRLGGPEPWKGSPSARATPELLEYGQSRCARCRICSVRCHKFLVSRVGEDWIFLVLLGLLMALVSWAMDYAIAVCLQAQQWMSRGLNTNILLQYLAWVTYPVVLITFSAGFTQILAPQAVGSGIPEMKTILRGVVLKEYLTLKTFVAKVIGLTCALGSGMPLGKEGPFVHIASMCAALLSKFLSLFGGIYENESRNTEMLAAACAVGVGCCFAAPIGGVLFSIEVTSTFFAVRNYWRGFFAATFSAFIFRVLAVWNRDEETITALFKTRFRLDFPFDLQELPAFAVIGIASGFGGALFVYLNRKIVQVMRKQKTINRFLMKKRLLFPALVTLLISTLTFPPGFGQFMAGQLSQKETLVTLFDNRTWVRQGLVEDLGAPSTSQAWSPPRANVFLTLVIFILMKFWMSALATTIPVPCGAFMPVFVIGAAFGRLVGESMAAWFPDGIHTDSSTYRIVPGGYAVVGAAALAGAVTHTVSTAVIVFELTGQIAHILPVMIAVILANAVAQSLQPSLYDSIIRIKKLPYLPELGWGRHQQYRVRVEDIMVRDVPHVALSCTFRDLRLALHRTKGRMLALVESPESMILLGSIERSQVVALLGAQLSPARRRQHMQKLRKAQMSPPSDQESPPSSETSIRFQVNTEDSGFPGAHGQTHKPLKPALKRGPSNATSLQEGTTGNMESAGIALRSLFCGSPPLESTTSELEKSESCDKRKLKRVRISLASDSDLEGKMSPEEILEWEEQQLDEPVNFSDCKIDPAPFQLVERTSLHKTHTIFSLLGVDHAYVTSIGRLIGIVTLKELRKAIEGSVTAQGVKVRPPLASFRDSATSSSDTETTEVHALWGPRSRHGLPREGTPSDSDDKCQ</sequence>
<keyword id="KW-0129">CBS domain</keyword>
<keyword id="KW-1003">Cell membrane</keyword>
<keyword id="KW-0966">Cell projection</keyword>
<keyword id="KW-0868">Chloride</keyword>
<keyword id="KW-0869">Chloride channel</keyword>
<keyword id="KW-0407">Ion channel</keyword>
<keyword id="KW-0406">Ion transport</keyword>
<keyword id="KW-0472">Membrane</keyword>
<keyword id="KW-0597">Phosphoprotein</keyword>
<keyword id="KW-0628">Postsynaptic cell membrane</keyword>
<keyword id="KW-1185">Reference proteome</keyword>
<keyword id="KW-0677">Repeat</keyword>
<keyword id="KW-0770">Synapse</keyword>
<keyword id="KW-0812">Transmembrane</keyword>
<keyword id="KW-1133">Transmembrane helix</keyword>
<keyword id="KW-0813">Transport</keyword>
<keyword id="KW-0851">Voltage-gated channel</keyword>
<accession>P35525</accession>
<dbReference type="EMBL" id="X64139">
    <property type="protein sequence ID" value="CAA45500.1"/>
    <property type="molecule type" value="mRNA"/>
</dbReference>
<dbReference type="PIR" id="S23399">
    <property type="entry name" value="S23399"/>
</dbReference>
<dbReference type="RefSeq" id="NP_058833.1">
    <property type="nucleotide sequence ID" value="NM_017137.2"/>
</dbReference>
<dbReference type="RefSeq" id="XP_006248624.1">
    <property type="nucleotide sequence ID" value="XM_006248562.3"/>
</dbReference>
<dbReference type="SMR" id="P35525"/>
<dbReference type="CORUM" id="P35525"/>
<dbReference type="FunCoup" id="P35525">
    <property type="interactions" value="221"/>
</dbReference>
<dbReference type="STRING" id="10116.ENSRNOP00000050925"/>
<dbReference type="TCDB" id="2.A.49.2.6">
    <property type="family name" value="the chloride carrier/channel (clc) family"/>
</dbReference>
<dbReference type="GlyGen" id="P35525">
    <property type="glycosylation" value="1 site"/>
</dbReference>
<dbReference type="iPTMnet" id="P35525"/>
<dbReference type="PhosphoSitePlus" id="P35525"/>
<dbReference type="PaxDb" id="10116-ENSRNOP00000050925"/>
<dbReference type="Ensembl" id="ENSRNOT00000050927.7">
    <property type="protein sequence ID" value="ENSRNOP00000050925.3"/>
    <property type="gene ID" value="ENSRNOG00000001742.9"/>
</dbReference>
<dbReference type="GeneID" id="29232"/>
<dbReference type="KEGG" id="rno:29232"/>
<dbReference type="AGR" id="RGD:2361"/>
<dbReference type="CTD" id="1181"/>
<dbReference type="RGD" id="2361">
    <property type="gene designation" value="Clcn2"/>
</dbReference>
<dbReference type="eggNOG" id="KOG0476">
    <property type="taxonomic scope" value="Eukaryota"/>
</dbReference>
<dbReference type="GeneTree" id="ENSGT00940000155439"/>
<dbReference type="InParanoid" id="P35525"/>
<dbReference type="OMA" id="ACFMFNN"/>
<dbReference type="OrthoDB" id="4564at2759"/>
<dbReference type="PhylomeDB" id="P35525"/>
<dbReference type="TreeFam" id="TF300522"/>
<dbReference type="Reactome" id="R-RNO-2672351">
    <property type="pathway name" value="Stimuli-sensing channels"/>
</dbReference>
<dbReference type="PRO" id="PR:P35525"/>
<dbReference type="Proteomes" id="UP000002494">
    <property type="component" value="Chromosome 11"/>
</dbReference>
<dbReference type="Bgee" id="ENSRNOG00000001742">
    <property type="expression patterns" value="Expressed in duodenum and 17 other cell types or tissues"/>
</dbReference>
<dbReference type="ExpressionAtlas" id="P35525">
    <property type="expression patterns" value="baseline"/>
</dbReference>
<dbReference type="GO" id="GO:0015629">
    <property type="term" value="C:actin cytoskeleton"/>
    <property type="evidence" value="ECO:0000250"/>
    <property type="project" value="UniProtKB"/>
</dbReference>
<dbReference type="GO" id="GO:0097450">
    <property type="term" value="C:astrocyte end-foot"/>
    <property type="evidence" value="ECO:0000314"/>
    <property type="project" value="UniProtKB"/>
</dbReference>
<dbReference type="GO" id="GO:0043194">
    <property type="term" value="C:axon initial segment"/>
    <property type="evidence" value="ECO:0000314"/>
    <property type="project" value="UniProtKB"/>
</dbReference>
<dbReference type="GO" id="GO:0016323">
    <property type="term" value="C:basolateral plasma membrane"/>
    <property type="evidence" value="ECO:0000266"/>
    <property type="project" value="RGD"/>
</dbReference>
<dbReference type="GO" id="GO:0034707">
    <property type="term" value="C:chloride channel complex"/>
    <property type="evidence" value="ECO:0007669"/>
    <property type="project" value="UniProtKB-KW"/>
</dbReference>
<dbReference type="GO" id="GO:0030425">
    <property type="term" value="C:dendrite"/>
    <property type="evidence" value="ECO:0000314"/>
    <property type="project" value="RGD"/>
</dbReference>
<dbReference type="GO" id="GO:0032591">
    <property type="term" value="C:dendritic spine membrane"/>
    <property type="evidence" value="ECO:0000314"/>
    <property type="project" value="UniProtKB"/>
</dbReference>
<dbReference type="GO" id="GO:0043209">
    <property type="term" value="C:myelin sheath"/>
    <property type="evidence" value="ECO:0000266"/>
    <property type="project" value="RGD"/>
</dbReference>
<dbReference type="GO" id="GO:0043204">
    <property type="term" value="C:perikaryon"/>
    <property type="evidence" value="ECO:0000314"/>
    <property type="project" value="RGD"/>
</dbReference>
<dbReference type="GO" id="GO:0005886">
    <property type="term" value="C:plasma membrane"/>
    <property type="evidence" value="ECO:0000250"/>
    <property type="project" value="UniProtKB"/>
</dbReference>
<dbReference type="GO" id="GO:0045211">
    <property type="term" value="C:postsynaptic membrane"/>
    <property type="evidence" value="ECO:0007669"/>
    <property type="project" value="UniProtKB-KW"/>
</dbReference>
<dbReference type="GO" id="GO:0017081">
    <property type="term" value="F:chloride channel regulator activity"/>
    <property type="evidence" value="ECO:0000266"/>
    <property type="project" value="RGD"/>
</dbReference>
<dbReference type="GO" id="GO:0005247">
    <property type="term" value="F:voltage-gated chloride channel activity"/>
    <property type="evidence" value="ECO:0000314"/>
    <property type="project" value="UniProtKB"/>
</dbReference>
<dbReference type="GO" id="GO:0008308">
    <property type="term" value="F:voltage-gated monoatomic anion channel activity"/>
    <property type="evidence" value="ECO:0000314"/>
    <property type="project" value="UniProtKB"/>
</dbReference>
<dbReference type="GO" id="GO:0072320">
    <property type="term" value="F:volume-sensitive chloride channel activity"/>
    <property type="evidence" value="ECO:0000315"/>
    <property type="project" value="UniProtKB"/>
</dbReference>
<dbReference type="GO" id="GO:0090425">
    <property type="term" value="P:acinar cell differentiation"/>
    <property type="evidence" value="ECO:0000266"/>
    <property type="project" value="RGD"/>
</dbReference>
<dbReference type="GO" id="GO:0060689">
    <property type="term" value="P:cell differentiation involved in salivary gland development"/>
    <property type="evidence" value="ECO:0000266"/>
    <property type="project" value="RGD"/>
</dbReference>
<dbReference type="GO" id="GO:0071476">
    <property type="term" value="P:cellular hypotonic response"/>
    <property type="evidence" value="ECO:0000315"/>
    <property type="project" value="UniProtKB"/>
</dbReference>
<dbReference type="GO" id="GO:0006821">
    <property type="term" value="P:chloride transport"/>
    <property type="evidence" value="ECO:0000314"/>
    <property type="project" value="RGD"/>
</dbReference>
<dbReference type="GO" id="GO:0030324">
    <property type="term" value="P:lung development"/>
    <property type="evidence" value="ECO:0000315"/>
    <property type="project" value="RGD"/>
</dbReference>
<dbReference type="GO" id="GO:0006911">
    <property type="term" value="P:phagocytosis, engulfment"/>
    <property type="evidence" value="ECO:0000266"/>
    <property type="project" value="RGD"/>
</dbReference>
<dbReference type="GO" id="GO:0048714">
    <property type="term" value="P:positive regulation of oligodendrocyte differentiation"/>
    <property type="evidence" value="ECO:0000315"/>
    <property type="project" value="RGD"/>
</dbReference>
<dbReference type="GO" id="GO:0032347">
    <property type="term" value="P:regulation of aldosterone biosynthetic process"/>
    <property type="evidence" value="ECO:0000250"/>
    <property type="project" value="UniProtKB"/>
</dbReference>
<dbReference type="GO" id="GO:0098902">
    <property type="term" value="P:regulation of membrane depolarization during action potential"/>
    <property type="evidence" value="ECO:0000315"/>
    <property type="project" value="UniProtKB"/>
</dbReference>
<dbReference type="GO" id="GO:0060075">
    <property type="term" value="P:regulation of resting membrane potential"/>
    <property type="evidence" value="ECO:0000266"/>
    <property type="project" value="RGD"/>
</dbReference>
<dbReference type="GO" id="GO:0060041">
    <property type="term" value="P:retina development in camera-type eye"/>
    <property type="evidence" value="ECO:0000266"/>
    <property type="project" value="RGD"/>
</dbReference>
<dbReference type="GO" id="GO:0030322">
    <property type="term" value="P:stabilization of membrane potential"/>
    <property type="evidence" value="ECO:0000266"/>
    <property type="project" value="RGD"/>
</dbReference>
<dbReference type="CDD" id="cd04591">
    <property type="entry name" value="CBS_pair_voltage-gated_CLC_euk_bac"/>
    <property type="match status" value="1"/>
</dbReference>
<dbReference type="CDD" id="cd03683">
    <property type="entry name" value="ClC_1_like"/>
    <property type="match status" value="1"/>
</dbReference>
<dbReference type="FunFam" id="1.10.3080.10:FF:000002">
    <property type="entry name" value="Chloride channel 2c"/>
    <property type="match status" value="1"/>
</dbReference>
<dbReference type="FunFam" id="3.10.580.10:FF:000024">
    <property type="entry name" value="Chloride channel 2c"/>
    <property type="match status" value="1"/>
</dbReference>
<dbReference type="FunFam" id="3.10.580.10:FF:000019">
    <property type="entry name" value="Chloride voltage-gated channel 2"/>
    <property type="match status" value="1"/>
</dbReference>
<dbReference type="Gene3D" id="3.10.580.10">
    <property type="entry name" value="CBS-domain"/>
    <property type="match status" value="2"/>
</dbReference>
<dbReference type="Gene3D" id="1.10.3080.10">
    <property type="entry name" value="Clc chloride channel"/>
    <property type="match status" value="1"/>
</dbReference>
<dbReference type="InterPro" id="IPR046342">
    <property type="entry name" value="CBS_dom_sf"/>
</dbReference>
<dbReference type="InterPro" id="IPR002244">
    <property type="entry name" value="Cl-channel-2"/>
</dbReference>
<dbReference type="InterPro" id="IPR014743">
    <property type="entry name" value="Cl-channel_core"/>
</dbReference>
<dbReference type="InterPro" id="IPR050970">
    <property type="entry name" value="Cl_channel_volt-gated"/>
</dbReference>
<dbReference type="InterPro" id="IPR001807">
    <property type="entry name" value="ClC"/>
</dbReference>
<dbReference type="PANTHER" id="PTHR45720">
    <property type="entry name" value="CHLORIDE CHANNEL PROTEIN 2"/>
    <property type="match status" value="1"/>
</dbReference>
<dbReference type="PANTHER" id="PTHR45720:SF6">
    <property type="entry name" value="CHLORIDE CHANNEL PROTEIN 2"/>
    <property type="match status" value="1"/>
</dbReference>
<dbReference type="Pfam" id="PF00654">
    <property type="entry name" value="Voltage_CLC"/>
    <property type="match status" value="1"/>
</dbReference>
<dbReference type="PRINTS" id="PR00762">
    <property type="entry name" value="CLCHANNEL"/>
</dbReference>
<dbReference type="PRINTS" id="PR01113">
    <property type="entry name" value="CLCHANNEL2"/>
</dbReference>
<dbReference type="SUPFAM" id="SSF54631">
    <property type="entry name" value="CBS-domain pair"/>
    <property type="match status" value="1"/>
</dbReference>
<dbReference type="SUPFAM" id="SSF81340">
    <property type="entry name" value="Clc chloride channel"/>
    <property type="match status" value="1"/>
</dbReference>
<dbReference type="PROSITE" id="PS51371">
    <property type="entry name" value="CBS"/>
    <property type="match status" value="2"/>
</dbReference>
<comment type="function">
    <text evidence="2 3 9 10 11 12 13">Voltage-gated and osmosensitive chloride channel. Forms a homodimeric channel where each subunit has its own ion conduction pathway. Conducts double-barreled currents controlled by two types of gates, two fast glutamate gates that control each subunit independently and a slow common gate that opens and shuts off both subunits simultaneously. Displays inward rectification currents activated upon membrane hyperpolarization and extracellular hypotonicity (PubMed:12163466, PubMed:1311421, PubMed:1334533, PubMed:22405205). Contributes to chloride conductance involved in neuron excitability. In hippocampal neurons, generates a significant part of resting membrane conductance and provides an additional chloride efflux pathway to prevent chloride accumulation in dendrites upon GABA receptor activation. In glia, associates with the auxiliary subunit HEPACAM/GlialCAM at astrocytic processes and myelinated fiber tracts where it may regulate transcellular chloride flux buffering extracellular chloride and potassium concentrations (By similarity) (PubMed:8816717). Regulates aldosterone production in adrenal glands. The opening of CLCN2 channels at hyperpolarized membrane potentials in the glomerulosa causes cell membrane depolarization, activation of voltage-gated calcium channels and increased expression of aldosterone synthase, the rate-limiting enzyme for aldosterone biosynthesis (By similarity). Contributes to chloride conductance in retinal pigment epithelium involved in phagocytosis of shed photoreceptor outer segments and photoreceptor renewal (By similarity). Conducts chloride currents at the basolateral membrane of epithelial cells with a role in chloride reabsorption rather than secretion (By similarity). Permeable to small monovalent anions with chloride &gt; thiocyanate &gt; bromide &gt; nitrate &gt; iodide ion selectivity (By similarity) (PubMed:1311421, PubMed:22405205, PubMed:8816717).</text>
</comment>
<comment type="catalytic activity">
    <reaction evidence="10 12 13">
        <text>chloride(in) = chloride(out)</text>
        <dbReference type="Rhea" id="RHEA:29823"/>
        <dbReference type="ChEBI" id="CHEBI:17996"/>
    </reaction>
</comment>
<comment type="catalytic activity">
    <reaction evidence="3">
        <text>thiocyanate(in) = thiocyanate(out)</text>
        <dbReference type="Rhea" id="RHEA:75347"/>
        <dbReference type="ChEBI" id="CHEBI:18022"/>
    </reaction>
</comment>
<comment type="catalytic activity">
    <reaction evidence="10 12">
        <text>bromide(in) = bromide(out)</text>
        <dbReference type="Rhea" id="RHEA:75383"/>
        <dbReference type="ChEBI" id="CHEBI:15858"/>
    </reaction>
</comment>
<comment type="catalytic activity">
    <reaction evidence="12">
        <text>nitrate(in) = nitrate(out)</text>
        <dbReference type="Rhea" id="RHEA:34923"/>
        <dbReference type="ChEBI" id="CHEBI:17632"/>
    </reaction>
</comment>
<comment type="catalytic activity">
    <reaction evidence="10 12">
        <text>iodide(out) = iodide(in)</text>
        <dbReference type="Rhea" id="RHEA:66324"/>
        <dbReference type="ChEBI" id="CHEBI:16382"/>
    </reaction>
</comment>
<comment type="activity regulation">
    <text evidence="2 3 4 13">Common gate kinetics are down-regulated by intracellular ATP. Inhibited by AK-42, a derivative of meclofenamate (By similarity). Inhibited by Cd(2+) (By similarity). Inhibited by Zn(2+) and PKC activation (PubMed:8816717). Inhibited at acidic pH (By similarity). CCLN2:HEPACAM channel conductance is up-regulated upon hypo-osmolarity (By similarity).</text>
</comment>
<comment type="subunit">
    <text evidence="2">Homodimer. Interacts with auxiliary subunit HEPACAM.</text>
</comment>
<comment type="subcellular location">
    <subcellularLocation>
        <location evidence="9 12">Cell membrane</location>
        <topology evidence="5">Multi-pass membrane protein</topology>
    </subcellularLocation>
    <subcellularLocation>
        <location evidence="2">Basolateral cell membrane</location>
        <topology evidence="5">Multi-pass membrane protein</topology>
    </subcellularLocation>
    <subcellularLocation>
        <location evidence="8">Cell projection</location>
        <location evidence="8">Dendritic spine membrane</location>
        <topology evidence="5">Multi-pass membrane protein</topology>
    </subcellularLocation>
    <subcellularLocation>
        <location evidence="8">Cell projection</location>
        <location evidence="8">Axon</location>
    </subcellularLocation>
    <text evidence="2 8 12">Sorting to the basolateral membrane is mediated by AP-1 clathrin adapter (By similarity). Localizes at axon initial segments and dendritic shaft and spikes. Colocalizes with HEPACAM and GFAP at astrocyte end-foot in contact with brain capillaries and other glial cells (PubMed:11068136, PubMed:22405205).</text>
</comment>
<comment type="tissue specificity">
    <text evidence="8 10">Ubiquitously expressed (PubMed:1311421). Expressed in neurons and glial cells (at protein level) (PubMed:11068136).</text>
</comment>
<comment type="PTM">
    <text evidence="9">Phosphorylated. Activated by dephosphorylation.</text>
</comment>
<comment type="similarity">
    <text evidence="14">Belongs to the chloride channel (TC 2.A.49) family. ClC-2/CLCN2 subfamily.</text>
</comment>
<reference key="1">
    <citation type="journal article" date="1992" name="Nature">
        <title>A chloride channel widely expressed in epithelial and non-epithelial cells.</title>
        <authorList>
            <person name="Thiemann A."/>
            <person name="Gruender S."/>
            <person name="Pusch M."/>
            <person name="Jentsch T.J."/>
        </authorList>
    </citation>
    <scope>NUCLEOTIDE SEQUENCE [MRNA]</scope>
    <scope>FUNCTION</scope>
    <scope>TRANSPORTER ACTIVITY</scope>
    <scope>TISSUE SPECIFICITY</scope>
    <source>
        <tissue>Brain</tissue>
    </source>
</reference>
<reference key="2">
    <citation type="journal article" date="1992" name="Nature">
        <title>Regions involved in the opening of CIC-2 chloride channel by voltage and cell volume.</title>
        <authorList>
            <person name="Gruender S."/>
            <person name="Thiemann A."/>
            <person name="Pusch M."/>
            <person name="Jentsch T.J."/>
        </authorList>
    </citation>
    <scope>FUNCTION</scope>
    <scope>REGION</scope>
    <scope>MUTAGENESIS OF GLN-25; THR-26 AND LEU-27</scope>
</reference>
<reference key="3">
    <citation type="journal article" date="1996" name="Neuron">
        <title>Alteration of GABAA receptor function following gene transfer of the CLC-2 chloride channel.</title>
        <authorList>
            <person name="Staley K."/>
            <person name="Smith R."/>
            <person name="Schaack J."/>
            <person name="Wilcox C."/>
            <person name="Jentsch T.J."/>
        </authorList>
    </citation>
    <scope>FUNCTION</scope>
    <scope>TRANSPORTER ACTIVITY</scope>
    <scope>ACTIVITY REGULATION</scope>
</reference>
<reference key="4">
    <citation type="journal article" date="2000" name="Neuroscience">
        <title>Distribution of chloride channel-2-immunoreactive neuronal and astrocytic processes in the hippocampus.</title>
        <authorList>
            <person name="Sik A."/>
            <person name="Smith R.L."/>
            <person name="Freund T.F."/>
        </authorList>
    </citation>
    <scope>SUBCELLULAR LOCATION</scope>
    <scope>TISSUE SPECIFICITY</scope>
</reference>
<reference key="5">
    <citation type="journal article" date="2002" name="J. Cell Biol.">
        <title>Cell cycle- and swelling-induced activation of a Caenorhabditis elegans ClC channel is mediated by CeGLC-7alpha/beta phosphatases.</title>
        <authorList>
            <person name="Rutledge E."/>
            <person name="Denton J."/>
            <person name="Strange K."/>
        </authorList>
    </citation>
    <scope>FUNCTION</scope>
    <scope>SUBCELLULAR LOCATION</scope>
    <scope>PHOSPHORYLATION AND DEPHOSPHORYLATION</scope>
</reference>
<reference key="6">
    <citation type="journal article" date="2012" name="Nat. Commun.">
        <title>Quantitative maps of protein phosphorylation sites across 14 different rat organs and tissues.</title>
        <authorList>
            <person name="Lundby A."/>
            <person name="Secher A."/>
            <person name="Lage K."/>
            <person name="Nordsborg N.B."/>
            <person name="Dmytriyev A."/>
            <person name="Lundby C."/>
            <person name="Olsen J.V."/>
        </authorList>
    </citation>
    <scope>PHOSPHORYLATION [LARGE SCALE ANALYSIS] AT SER-767</scope>
    <scope>IDENTIFICATION BY MASS SPECTROMETRY [LARGE SCALE ANALYSIS]</scope>
</reference>
<reference key="7">
    <citation type="journal article" date="2012" name="Neuron">
        <title>GlialCAM, a protein defective in a leukodystrophy, serves as a ClC-2 Cl(-) channel auxiliary subunit.</title>
        <authorList>
            <person name="Jeworutzki E."/>
            <person name="Lopez-Hernandez T."/>
            <person name="Capdevila-Nortes X."/>
            <person name="Sirisi S."/>
            <person name="Bengtsson L."/>
            <person name="Montolio M."/>
            <person name="Zifarelli G."/>
            <person name="Arnedo T."/>
            <person name="Mueller C.S."/>
            <person name="Schulte U."/>
            <person name="Nunes V."/>
            <person name="Martinez A."/>
            <person name="Jentsch T.J."/>
            <person name="Gasull X."/>
            <person name="Pusch M."/>
            <person name="Estevez R."/>
        </authorList>
    </citation>
    <scope>FUNCTION</scope>
    <scope>TRANSPORTER ACTIVITY</scope>
    <scope>SUBCELLULAR LOCATION</scope>
    <scope>INTERACTION WITH HEPACAM</scope>
</reference>
<proteinExistence type="evidence at protein level"/>
<protein>
    <recommendedName>
        <fullName>Chloride channel protein 2</fullName>
        <shortName>ClC-2</shortName>
    </recommendedName>
</protein>
<feature type="chain" id="PRO_0000094436" description="Chloride channel protein 2">
    <location>
        <begin position="1"/>
        <end position="907"/>
    </location>
</feature>
<feature type="topological domain" description="Cytoplasmic" evidence="1">
    <location>
        <begin position="1"/>
        <end position="93"/>
    </location>
</feature>
<feature type="transmembrane region" description="Helical" evidence="1">
    <location>
        <begin position="94"/>
        <end position="127"/>
    </location>
</feature>
<feature type="transmembrane region" description="Helical" evidence="1">
    <location>
        <begin position="136"/>
        <end position="161"/>
    </location>
</feature>
<feature type="intramembrane region" description="Helical" evidence="5">
    <location>
        <begin position="170"/>
        <end position="177"/>
    </location>
</feature>
<feature type="transmembrane region" description="Helical" evidence="1">
    <location>
        <begin position="186"/>
        <end position="204"/>
    </location>
</feature>
<feature type="transmembrane region" description="Helical" evidence="1">
    <location>
        <begin position="211"/>
        <end position="229"/>
    </location>
</feature>
<feature type="intramembrane region" description="Helical" evidence="1">
    <location>
        <begin position="245"/>
        <end position="257"/>
    </location>
</feature>
<feature type="intramembrane region" description="Helical" evidence="1">
    <location>
        <begin position="261"/>
        <end position="269"/>
    </location>
</feature>
<feature type="transmembrane region" description="Helical" evidence="1">
    <location>
        <begin position="281"/>
        <end position="301"/>
    </location>
</feature>
<feature type="transmembrane region" description="Helical" evidence="1">
    <location>
        <begin position="327"/>
        <end position="355"/>
    </location>
</feature>
<feature type="transmembrane region" description="Helical" evidence="1">
    <location>
        <begin position="364"/>
        <end position="383"/>
    </location>
</feature>
<feature type="transmembrane region" description="Helical" evidence="1">
    <location>
        <begin position="435"/>
        <end position="455"/>
    </location>
</feature>
<feature type="transmembrane region" description="Helical" evidence="1">
    <location>
        <begin position="463"/>
        <end position="486"/>
    </location>
</feature>
<feature type="intramembrane region" description="Helical" evidence="1">
    <location>
        <begin position="503"/>
        <end position="517"/>
    </location>
</feature>
<feature type="intramembrane region" description="Note=Loop between two helices" evidence="1">
    <location>
        <begin position="518"/>
        <end position="519"/>
    </location>
</feature>
<feature type="intramembrane region" description="Helical" evidence="1">
    <location>
        <begin position="520"/>
        <end position="531"/>
    </location>
</feature>
<feature type="intramembrane region" description="Note=Loop between two helices" evidence="1">
    <location>
        <begin position="532"/>
        <end position="536"/>
    </location>
</feature>
<feature type="transmembrane region" description="Helical" evidence="1">
    <location>
        <begin position="537"/>
        <end position="554"/>
    </location>
</feature>
<feature type="topological domain" description="Cytoplasmic" evidence="1">
    <location>
        <begin position="555"/>
        <end position="907"/>
    </location>
</feature>
<feature type="domain" description="CBS 1" evidence="6">
    <location>
        <begin position="590"/>
        <end position="648"/>
    </location>
</feature>
<feature type="domain" description="CBS 2" evidence="6">
    <location>
        <begin position="799"/>
        <end position="859"/>
    </location>
</feature>
<feature type="region of interest" description="Essential for channel gating by both voltage and cell volume" evidence="11">
    <location>
        <begin position="22"/>
        <end position="40"/>
    </location>
</feature>
<feature type="region of interest" description="Modulates channel gating by both voltage and cell volume" evidence="11">
    <location>
        <begin position="42"/>
        <end position="55"/>
    </location>
</feature>
<feature type="region of interest" description="Disordered" evidence="7">
    <location>
        <begin position="650"/>
        <end position="720"/>
    </location>
</feature>
<feature type="region of interest" description="Disordered" evidence="7">
    <location>
        <begin position="865"/>
        <end position="907"/>
    </location>
</feature>
<feature type="short sequence motif" description="Selectivity filter part_1" evidence="1">
    <location>
        <begin position="167"/>
        <end position="171"/>
    </location>
</feature>
<feature type="short sequence motif" description="Selectivity filter part_2" evidence="1">
    <location>
        <begin position="209"/>
        <end position="213"/>
    </location>
</feature>
<feature type="short sequence motif" description="Selectivity filter part_3" evidence="1">
    <location>
        <begin position="463"/>
        <end position="467"/>
    </location>
</feature>
<feature type="short sequence motif" description="Basolateral membrane sorting" evidence="2">
    <location>
        <begin position="821"/>
        <end position="822"/>
    </location>
</feature>
<feature type="compositionally biased region" description="Basic residues" evidence="7">
    <location>
        <begin position="650"/>
        <end position="660"/>
    </location>
</feature>
<feature type="compositionally biased region" description="Low complexity" evidence="7">
    <location>
        <begin position="664"/>
        <end position="678"/>
    </location>
</feature>
<feature type="compositionally biased region" description="Basic residues" evidence="7">
    <location>
        <begin position="696"/>
        <end position="705"/>
    </location>
</feature>
<feature type="compositionally biased region" description="Polar residues" evidence="7">
    <location>
        <begin position="710"/>
        <end position="720"/>
    </location>
</feature>
<feature type="site" description="Protopore gate" evidence="2">
    <location>
        <position position="211"/>
    </location>
</feature>
<feature type="site" description="Couples extracellular acidification to the channel closure" evidence="4">
    <location>
        <position position="536"/>
    </location>
</feature>
<feature type="modified residue" description="Phosphothreonine" evidence="3">
    <location>
        <position position="26"/>
    </location>
</feature>
<feature type="modified residue" description="Phosphoserine" evidence="15">
    <location>
        <position position="767"/>
    </location>
</feature>
<feature type="mutagenesis site" description="Constitutively open channel; when associated with L-26." evidence="11">
    <original>Q</original>
    <variation>L</variation>
    <location>
        <position position="25"/>
    </location>
</feature>
<feature type="mutagenesis site" description="Constitutively open channel; when associated with E-27." evidence="11">
    <original>T</original>
    <variation>E</variation>
    <location>
        <position position="26"/>
    </location>
</feature>
<feature type="mutagenesis site" description="Constitutively open channel; when associated with L-25." evidence="11">
    <original>T</original>
    <variation>L</variation>
    <location>
        <position position="26"/>
    </location>
</feature>
<feature type="mutagenesis site" description="Constitutively open channel; when associated with E-26." evidence="11">
    <original>L</original>
    <variation>E</variation>
    <location>
        <position position="27"/>
    </location>
</feature>
<organism>
    <name type="scientific">Rattus norvegicus</name>
    <name type="common">Rat</name>
    <dbReference type="NCBI Taxonomy" id="10116"/>
    <lineage>
        <taxon>Eukaryota</taxon>
        <taxon>Metazoa</taxon>
        <taxon>Chordata</taxon>
        <taxon>Craniata</taxon>
        <taxon>Vertebrata</taxon>
        <taxon>Euteleostomi</taxon>
        <taxon>Mammalia</taxon>
        <taxon>Eutheria</taxon>
        <taxon>Euarchontoglires</taxon>
        <taxon>Glires</taxon>
        <taxon>Rodentia</taxon>
        <taxon>Myomorpha</taxon>
        <taxon>Muroidea</taxon>
        <taxon>Muridae</taxon>
        <taxon>Murinae</taxon>
        <taxon>Rattus</taxon>
    </lineage>
</organism>
<gene>
    <name type="primary">Clcn2</name>
</gene>
<name>CLCN2_RAT</name>